<protein>
    <recommendedName>
        <fullName>Probable pectin lyase A</fullName>
        <shortName>PLA</shortName>
        <ecNumber>4.2.2.10</ecNumber>
    </recommendedName>
</protein>
<organism>
    <name type="scientific">Aspergillus fumigatus (strain ATCC MYA-4609 / CBS 101355 / FGSC A1100 / Af293)</name>
    <name type="common">Neosartorya fumigata</name>
    <dbReference type="NCBI Taxonomy" id="330879"/>
    <lineage>
        <taxon>Eukaryota</taxon>
        <taxon>Fungi</taxon>
        <taxon>Dikarya</taxon>
        <taxon>Ascomycota</taxon>
        <taxon>Pezizomycotina</taxon>
        <taxon>Eurotiomycetes</taxon>
        <taxon>Eurotiomycetidae</taxon>
        <taxon>Eurotiales</taxon>
        <taxon>Aspergillaceae</taxon>
        <taxon>Aspergillus</taxon>
        <taxon>Aspergillus subgen. Fumigati</taxon>
    </lineage>
</organism>
<evidence type="ECO:0000250" key="1"/>
<evidence type="ECO:0000255" key="2"/>
<evidence type="ECO:0000305" key="3"/>
<keyword id="KW-0119">Carbohydrate metabolism</keyword>
<keyword id="KW-0961">Cell wall biogenesis/degradation</keyword>
<keyword id="KW-1015">Disulfide bond</keyword>
<keyword id="KW-0325">Glycoprotein</keyword>
<keyword id="KW-0456">Lyase</keyword>
<keyword id="KW-0624">Polysaccharide degradation</keyword>
<keyword id="KW-1185">Reference proteome</keyword>
<keyword id="KW-0964">Secreted</keyword>
<keyword id="KW-0732">Signal</keyword>
<name>PELA_ASPFU</name>
<accession>Q4WV10</accession>
<comment type="function">
    <text evidence="1">Pectinolytic enzymes consist of four classes of enzymes: pectin lyase, polygalacturonase, pectin methylesterase and rhamnogalacturonase. Among pectinolytic enzymes, pectin lyase is the most important in depolymerization of pectin, since it cleaves internal glycosidic bonds of highly methylated pectins (By similarity).</text>
</comment>
<comment type="catalytic activity">
    <reaction>
        <text>Eliminative cleavage of (1-&gt;4)-alpha-D-galacturonan methyl ester to give oligosaccharides with 4-deoxy-6-O-methyl-alpha-D-galact-4-enuronosyl groups at their non-reducing ends.</text>
        <dbReference type="EC" id="4.2.2.10"/>
    </reaction>
</comment>
<comment type="subcellular location">
    <subcellularLocation>
        <location evidence="1">Secreted</location>
    </subcellularLocation>
</comment>
<comment type="similarity">
    <text evidence="3">Belongs to the polysaccharide lyase 1 family.</text>
</comment>
<dbReference type="EC" id="4.2.2.10"/>
<dbReference type="EMBL" id="AAHF01000003">
    <property type="protein sequence ID" value="EAL91566.1"/>
    <property type="molecule type" value="Genomic_DNA"/>
</dbReference>
<dbReference type="RefSeq" id="XP_753604.1">
    <property type="nucleotide sequence ID" value="XM_748511.1"/>
</dbReference>
<dbReference type="SMR" id="Q4WV10"/>
<dbReference type="STRING" id="330879.Q4WV10"/>
<dbReference type="GlyCosmos" id="Q4WV10">
    <property type="glycosylation" value="1 site, No reported glycans"/>
</dbReference>
<dbReference type="EnsemblFungi" id="EAL91566">
    <property type="protein sequence ID" value="EAL91566"/>
    <property type="gene ID" value="AFUA_5G10380"/>
</dbReference>
<dbReference type="GeneID" id="3511320"/>
<dbReference type="KEGG" id="afm:AFUA_5G10380"/>
<dbReference type="VEuPathDB" id="FungiDB:Afu5g10380"/>
<dbReference type="eggNOG" id="ENOG502QXM6">
    <property type="taxonomic scope" value="Eukaryota"/>
</dbReference>
<dbReference type="HOGENOM" id="CLU_021980_0_1_1"/>
<dbReference type="InParanoid" id="Q4WV10"/>
<dbReference type="OMA" id="RACLAKN"/>
<dbReference type="OrthoDB" id="1637350at2759"/>
<dbReference type="Proteomes" id="UP000002530">
    <property type="component" value="Chromosome 5"/>
</dbReference>
<dbReference type="GO" id="GO:0005576">
    <property type="term" value="C:extracellular region"/>
    <property type="evidence" value="ECO:0007669"/>
    <property type="project" value="UniProtKB-SubCell"/>
</dbReference>
<dbReference type="GO" id="GO:0030570">
    <property type="term" value="F:pectate lyase activity"/>
    <property type="evidence" value="ECO:0007669"/>
    <property type="project" value="InterPro"/>
</dbReference>
<dbReference type="GO" id="GO:0047490">
    <property type="term" value="F:pectin lyase activity"/>
    <property type="evidence" value="ECO:0000250"/>
    <property type="project" value="UniProtKB"/>
</dbReference>
<dbReference type="GO" id="GO:0071555">
    <property type="term" value="P:cell wall organization"/>
    <property type="evidence" value="ECO:0007669"/>
    <property type="project" value="UniProtKB-KW"/>
</dbReference>
<dbReference type="GO" id="GO:0045490">
    <property type="term" value="P:pectin catabolic process"/>
    <property type="evidence" value="ECO:0000250"/>
    <property type="project" value="UniProtKB"/>
</dbReference>
<dbReference type="FunFam" id="2.160.20.10:FF:000003">
    <property type="entry name" value="Pectin lyase F"/>
    <property type="match status" value="1"/>
</dbReference>
<dbReference type="Gene3D" id="2.160.20.10">
    <property type="entry name" value="Single-stranded right-handed beta-helix, Pectin lyase-like"/>
    <property type="match status" value="1"/>
</dbReference>
<dbReference type="InterPro" id="IPR002022">
    <property type="entry name" value="Pec_lyase"/>
</dbReference>
<dbReference type="InterPro" id="IPR012334">
    <property type="entry name" value="Pectin_lyas_fold"/>
</dbReference>
<dbReference type="InterPro" id="IPR011050">
    <property type="entry name" value="Pectin_lyase_fold/virulence"/>
</dbReference>
<dbReference type="InterPro" id="IPR045032">
    <property type="entry name" value="PEL"/>
</dbReference>
<dbReference type="PANTHER" id="PTHR31683">
    <property type="entry name" value="PECTATE LYASE 18-RELATED"/>
    <property type="match status" value="1"/>
</dbReference>
<dbReference type="PANTHER" id="PTHR31683:SF16">
    <property type="entry name" value="PECTIN LYASE A-RELATED"/>
    <property type="match status" value="1"/>
</dbReference>
<dbReference type="Pfam" id="PF00544">
    <property type="entry name" value="Pectate_lyase_4"/>
    <property type="match status" value="1"/>
</dbReference>
<dbReference type="SMART" id="SM00656">
    <property type="entry name" value="Amb_all"/>
    <property type="match status" value="1"/>
</dbReference>
<dbReference type="SUPFAM" id="SSF51126">
    <property type="entry name" value="Pectin lyase-like"/>
    <property type="match status" value="1"/>
</dbReference>
<reference key="1">
    <citation type="journal article" date="2005" name="Nature">
        <title>Genomic sequence of the pathogenic and allergenic filamentous fungus Aspergillus fumigatus.</title>
        <authorList>
            <person name="Nierman W.C."/>
            <person name="Pain A."/>
            <person name="Anderson M.J."/>
            <person name="Wortman J.R."/>
            <person name="Kim H.S."/>
            <person name="Arroyo J."/>
            <person name="Berriman M."/>
            <person name="Abe K."/>
            <person name="Archer D.B."/>
            <person name="Bermejo C."/>
            <person name="Bennett J.W."/>
            <person name="Bowyer P."/>
            <person name="Chen D."/>
            <person name="Collins M."/>
            <person name="Coulsen R."/>
            <person name="Davies R."/>
            <person name="Dyer P.S."/>
            <person name="Farman M.L."/>
            <person name="Fedorova N."/>
            <person name="Fedorova N.D."/>
            <person name="Feldblyum T.V."/>
            <person name="Fischer R."/>
            <person name="Fosker N."/>
            <person name="Fraser A."/>
            <person name="Garcia J.L."/>
            <person name="Garcia M.J."/>
            <person name="Goble A."/>
            <person name="Goldman G.H."/>
            <person name="Gomi K."/>
            <person name="Griffith-Jones S."/>
            <person name="Gwilliam R."/>
            <person name="Haas B.J."/>
            <person name="Haas H."/>
            <person name="Harris D.E."/>
            <person name="Horiuchi H."/>
            <person name="Huang J."/>
            <person name="Humphray S."/>
            <person name="Jimenez J."/>
            <person name="Keller N."/>
            <person name="Khouri H."/>
            <person name="Kitamoto K."/>
            <person name="Kobayashi T."/>
            <person name="Konzack S."/>
            <person name="Kulkarni R."/>
            <person name="Kumagai T."/>
            <person name="Lafton A."/>
            <person name="Latge J.-P."/>
            <person name="Li W."/>
            <person name="Lord A."/>
            <person name="Lu C."/>
            <person name="Majoros W.H."/>
            <person name="May G.S."/>
            <person name="Miller B.L."/>
            <person name="Mohamoud Y."/>
            <person name="Molina M."/>
            <person name="Monod M."/>
            <person name="Mouyna I."/>
            <person name="Mulligan S."/>
            <person name="Murphy L.D."/>
            <person name="O'Neil S."/>
            <person name="Paulsen I."/>
            <person name="Penalva M.A."/>
            <person name="Pertea M."/>
            <person name="Price C."/>
            <person name="Pritchard B.L."/>
            <person name="Quail M.A."/>
            <person name="Rabbinowitsch E."/>
            <person name="Rawlins N."/>
            <person name="Rajandream M.A."/>
            <person name="Reichard U."/>
            <person name="Renauld H."/>
            <person name="Robson G.D."/>
            <person name="Rodriguez de Cordoba S."/>
            <person name="Rodriguez-Pena J.M."/>
            <person name="Ronning C.M."/>
            <person name="Rutter S."/>
            <person name="Salzberg S.L."/>
            <person name="Sanchez M."/>
            <person name="Sanchez-Ferrero J.C."/>
            <person name="Saunders D."/>
            <person name="Seeger K."/>
            <person name="Squares R."/>
            <person name="Squares S."/>
            <person name="Takeuchi M."/>
            <person name="Tekaia F."/>
            <person name="Turner G."/>
            <person name="Vazquez de Aldana C.R."/>
            <person name="Weidman J."/>
            <person name="White O."/>
            <person name="Woodward J.R."/>
            <person name="Yu J.-H."/>
            <person name="Fraser C.M."/>
            <person name="Galagan J.E."/>
            <person name="Asai K."/>
            <person name="Machida M."/>
            <person name="Hall N."/>
            <person name="Barrell B.G."/>
            <person name="Denning D.W."/>
        </authorList>
    </citation>
    <scope>NUCLEOTIDE SEQUENCE [LARGE SCALE GENOMIC DNA]</scope>
    <source>
        <strain>ATCC MYA-4609 / CBS 101355 / FGSC A1100 / Af293</strain>
    </source>
</reference>
<proteinExistence type="inferred from homology"/>
<gene>
    <name type="primary">pelA</name>
    <name type="ORF">AFUA_5G10380</name>
</gene>
<feature type="signal peptide" evidence="2">
    <location>
        <begin position="1"/>
        <end position="20"/>
    </location>
</feature>
<feature type="chain" id="PRO_0000394340" description="Probable pectin lyase A">
    <location>
        <begin position="21"/>
        <end position="380"/>
    </location>
</feature>
<feature type="active site" evidence="2">
    <location>
        <position position="256"/>
    </location>
</feature>
<feature type="glycosylation site" description="N-linked (GlcNAc...) asparagine" evidence="2">
    <location>
        <position position="129"/>
    </location>
</feature>
<feature type="disulfide bond" evidence="1">
    <location>
        <begin position="83"/>
        <end position="102"/>
    </location>
</feature>
<feature type="disulfide bond" evidence="1">
    <location>
        <begin position="92"/>
        <end position="226"/>
    </location>
</feature>
<feature type="disulfide bond" evidence="1">
    <location>
        <begin position="323"/>
        <end position="331"/>
    </location>
</feature>
<sequence>MRYTSLFTAVTAALASTAAAVGVSGAAEGFAKGVTGGGNASPVYPKTNDELVSYLGDSQARVIVLTKTFDFRGTEGTTSGTGCAPWGTNAKCQLAINQNSWCDNYQPNAPKVSVSYDNAGVLGITVNSNKSLIGQGSAGVIKGKGLRIVSGAKNVIIQNIAITDINPKYVWGGDAITINNADLVWIDHVTTARIGRQHIVLGTQADNRITISNCYIDGVTDYSATCNGYHYWGIYLDGSNDMVTMKGNYIYHTSGRSPKVQGNTLLHAVNNYWYDNAGHAFEIGSGAYVVAEGNVFQNVKAVAESPISGKLFSSPDASTNKVCSSYLGHTCQINGFGSSGAFSQADTDILSKFKGKNIASAAAYNTVVSSVTANAGNGKL</sequence>